<protein>
    <recommendedName>
        <fullName evidence="1">Cell division protein ZapC</fullName>
    </recommendedName>
</protein>
<keyword id="KW-0131">Cell cycle</keyword>
<keyword id="KW-0132">Cell division</keyword>
<keyword id="KW-0963">Cytoplasm</keyword>
<keyword id="KW-1185">Reference proteome</keyword>
<keyword id="KW-0717">Septation</keyword>
<evidence type="ECO:0000255" key="1">
    <source>
        <dbReference type="HAMAP-Rule" id="MF_00906"/>
    </source>
</evidence>
<dbReference type="EMBL" id="CR954246">
    <property type="protein sequence ID" value="CAI86741.1"/>
    <property type="molecule type" value="Genomic_DNA"/>
</dbReference>
<dbReference type="SMR" id="Q3IGZ2"/>
<dbReference type="STRING" id="326442.PSHAa1668"/>
<dbReference type="KEGG" id="pha:PSHAa1668"/>
<dbReference type="PATRIC" id="fig|326442.8.peg.1613"/>
<dbReference type="eggNOG" id="ENOG502Z8AH">
    <property type="taxonomic scope" value="Bacteria"/>
</dbReference>
<dbReference type="HOGENOM" id="CLU_128248_0_0_6"/>
<dbReference type="BioCyc" id="PHAL326442:PSHA_RS08175-MONOMER"/>
<dbReference type="Proteomes" id="UP000006843">
    <property type="component" value="Chromosome I"/>
</dbReference>
<dbReference type="GO" id="GO:0005737">
    <property type="term" value="C:cytoplasm"/>
    <property type="evidence" value="ECO:0007669"/>
    <property type="project" value="UniProtKB-SubCell"/>
</dbReference>
<dbReference type="GO" id="GO:0000917">
    <property type="term" value="P:division septum assembly"/>
    <property type="evidence" value="ECO:0007669"/>
    <property type="project" value="UniProtKB-KW"/>
</dbReference>
<dbReference type="GO" id="GO:0043093">
    <property type="term" value="P:FtsZ-dependent cytokinesis"/>
    <property type="evidence" value="ECO:0007669"/>
    <property type="project" value="UniProtKB-UniRule"/>
</dbReference>
<dbReference type="HAMAP" id="MF_00906">
    <property type="entry name" value="ZapC"/>
    <property type="match status" value="1"/>
</dbReference>
<dbReference type="InterPro" id="IPR009809">
    <property type="entry name" value="ZapC"/>
</dbReference>
<dbReference type="InterPro" id="IPR048372">
    <property type="entry name" value="ZapC_C"/>
</dbReference>
<dbReference type="InterPro" id="IPR048373">
    <property type="entry name" value="ZapC_N"/>
</dbReference>
<dbReference type="Pfam" id="PF07126">
    <property type="entry name" value="ZapC_C"/>
    <property type="match status" value="1"/>
</dbReference>
<dbReference type="Pfam" id="PF21083">
    <property type="entry name" value="ZapC_N"/>
    <property type="match status" value="1"/>
</dbReference>
<dbReference type="PIRSF" id="PIRSF010252">
    <property type="entry name" value="ZapC"/>
    <property type="match status" value="1"/>
</dbReference>
<gene>
    <name evidence="1" type="primary">zapC</name>
    <name type="ordered locus">PSHAa1668</name>
</gene>
<name>ZAPC_PSET1</name>
<accession>Q3IGZ2</accession>
<reference key="1">
    <citation type="journal article" date="2005" name="Genome Res.">
        <title>Coping with cold: the genome of the versatile marine Antarctica bacterium Pseudoalteromonas haloplanktis TAC125.</title>
        <authorList>
            <person name="Medigue C."/>
            <person name="Krin E."/>
            <person name="Pascal G."/>
            <person name="Barbe V."/>
            <person name="Bernsel A."/>
            <person name="Bertin P.N."/>
            <person name="Cheung F."/>
            <person name="Cruveiller S."/>
            <person name="D'Amico S."/>
            <person name="Duilio A."/>
            <person name="Fang G."/>
            <person name="Feller G."/>
            <person name="Ho C."/>
            <person name="Mangenot S."/>
            <person name="Marino G."/>
            <person name="Nilsson J."/>
            <person name="Parrilli E."/>
            <person name="Rocha E.P.C."/>
            <person name="Rouy Z."/>
            <person name="Sekowska A."/>
            <person name="Tutino M.L."/>
            <person name="Vallenet D."/>
            <person name="von Heijne G."/>
            <person name="Danchin A."/>
        </authorList>
    </citation>
    <scope>NUCLEOTIDE SEQUENCE [LARGE SCALE GENOMIC DNA]</scope>
    <source>
        <strain>TAC 125</strain>
    </source>
</reference>
<organism>
    <name type="scientific">Pseudoalteromonas translucida (strain TAC 125)</name>
    <dbReference type="NCBI Taxonomy" id="326442"/>
    <lineage>
        <taxon>Bacteria</taxon>
        <taxon>Pseudomonadati</taxon>
        <taxon>Pseudomonadota</taxon>
        <taxon>Gammaproteobacteria</taxon>
        <taxon>Alteromonadales</taxon>
        <taxon>Pseudoalteromonadaceae</taxon>
        <taxon>Pseudoalteromonas</taxon>
    </lineage>
</organism>
<comment type="function">
    <text evidence="1">Contributes to the efficiency of the cell division process by stabilizing the polymeric form of the cell division protein FtsZ. Acts by promoting interactions between FtsZ protofilaments and suppressing the GTPase activity of FtsZ.</text>
</comment>
<comment type="subunit">
    <text evidence="1">Interacts directly with FtsZ.</text>
</comment>
<comment type="subcellular location">
    <subcellularLocation>
        <location evidence="1">Cytoplasm</location>
    </subcellularLocation>
</comment>
<comment type="similarity">
    <text evidence="1">Belongs to the ZapC family.</text>
</comment>
<proteinExistence type="inferred from homology"/>
<feature type="chain" id="PRO_0000413784" description="Cell division protein ZapC">
    <location>
        <begin position="1"/>
        <end position="176"/>
    </location>
</feature>
<sequence>MLQASKQWQWISCAKKNRLLLDLNEDMQLCTPYKLRQLTDSTFKNPYFSLEDAAFYEQVYQYLVQFKLWNPAQLCQISLNATAVKFQLKPVLAKSWFFEQYTGSTPSTEAVINLTSKAQSGEFLIVEHSSDASVCINLSENFQLDDNLSLVQFEAIRVLNNRVHPLLNQHIHSKIA</sequence>